<reference key="1">
    <citation type="journal article" date="2010" name="J. Bacteriol.">
        <title>Whole genome sequences of two Xylella fastidiosa strains (M12 and M23) causing almond leaf scorch disease in California.</title>
        <authorList>
            <person name="Chen J."/>
            <person name="Xie G."/>
            <person name="Han S."/>
            <person name="Chertkov O."/>
            <person name="Sims D."/>
            <person name="Civerolo E.L."/>
        </authorList>
    </citation>
    <scope>NUCLEOTIDE SEQUENCE [LARGE SCALE GENOMIC DNA]</scope>
    <source>
        <strain>M23</strain>
    </source>
</reference>
<feature type="chain" id="PRO_1000120825" description="Small ribosomal subunit protein bS6">
    <location>
        <begin position="1"/>
        <end position="143"/>
    </location>
</feature>
<feature type="region of interest" description="Disordered" evidence="2">
    <location>
        <begin position="95"/>
        <end position="143"/>
    </location>
</feature>
<feature type="compositionally biased region" description="Basic and acidic residues" evidence="2">
    <location>
        <begin position="105"/>
        <end position="121"/>
    </location>
</feature>
<organism>
    <name type="scientific">Xylella fastidiosa (strain M23)</name>
    <dbReference type="NCBI Taxonomy" id="405441"/>
    <lineage>
        <taxon>Bacteria</taxon>
        <taxon>Pseudomonadati</taxon>
        <taxon>Pseudomonadota</taxon>
        <taxon>Gammaproteobacteria</taxon>
        <taxon>Lysobacterales</taxon>
        <taxon>Lysobacteraceae</taxon>
        <taxon>Xylella</taxon>
    </lineage>
</organism>
<evidence type="ECO:0000255" key="1">
    <source>
        <dbReference type="HAMAP-Rule" id="MF_00360"/>
    </source>
</evidence>
<evidence type="ECO:0000256" key="2">
    <source>
        <dbReference type="SAM" id="MobiDB-lite"/>
    </source>
</evidence>
<evidence type="ECO:0000305" key="3"/>
<gene>
    <name evidence="1" type="primary">rpsF</name>
    <name type="ordered locus">XfasM23_2052</name>
</gene>
<proteinExistence type="inferred from homology"/>
<dbReference type="EMBL" id="CP001011">
    <property type="protein sequence ID" value="ACB93450.1"/>
    <property type="molecule type" value="Genomic_DNA"/>
</dbReference>
<dbReference type="RefSeq" id="WP_004090345.1">
    <property type="nucleotide sequence ID" value="NC_010577.1"/>
</dbReference>
<dbReference type="SMR" id="B2I9S9"/>
<dbReference type="GeneID" id="93905806"/>
<dbReference type="KEGG" id="xfn:XfasM23_2052"/>
<dbReference type="HOGENOM" id="CLU_113441_6_0_6"/>
<dbReference type="Proteomes" id="UP000001698">
    <property type="component" value="Chromosome"/>
</dbReference>
<dbReference type="GO" id="GO:0022627">
    <property type="term" value="C:cytosolic small ribosomal subunit"/>
    <property type="evidence" value="ECO:0007669"/>
    <property type="project" value="TreeGrafter"/>
</dbReference>
<dbReference type="GO" id="GO:0070181">
    <property type="term" value="F:small ribosomal subunit rRNA binding"/>
    <property type="evidence" value="ECO:0007669"/>
    <property type="project" value="TreeGrafter"/>
</dbReference>
<dbReference type="GO" id="GO:0003735">
    <property type="term" value="F:structural constituent of ribosome"/>
    <property type="evidence" value="ECO:0007669"/>
    <property type="project" value="InterPro"/>
</dbReference>
<dbReference type="GO" id="GO:0006412">
    <property type="term" value="P:translation"/>
    <property type="evidence" value="ECO:0007669"/>
    <property type="project" value="UniProtKB-UniRule"/>
</dbReference>
<dbReference type="CDD" id="cd00473">
    <property type="entry name" value="bS6"/>
    <property type="match status" value="1"/>
</dbReference>
<dbReference type="Gene3D" id="3.30.70.60">
    <property type="match status" value="1"/>
</dbReference>
<dbReference type="HAMAP" id="MF_00360">
    <property type="entry name" value="Ribosomal_bS6"/>
    <property type="match status" value="1"/>
</dbReference>
<dbReference type="InterPro" id="IPR000529">
    <property type="entry name" value="Ribosomal_bS6"/>
</dbReference>
<dbReference type="InterPro" id="IPR035980">
    <property type="entry name" value="Ribosomal_bS6_sf"/>
</dbReference>
<dbReference type="InterPro" id="IPR020814">
    <property type="entry name" value="Ribosomal_S6_plastid/chlpt"/>
</dbReference>
<dbReference type="InterPro" id="IPR014717">
    <property type="entry name" value="Transl_elong_EF1B/ribsomal_bS6"/>
</dbReference>
<dbReference type="NCBIfam" id="TIGR00166">
    <property type="entry name" value="S6"/>
    <property type="match status" value="1"/>
</dbReference>
<dbReference type="PANTHER" id="PTHR21011">
    <property type="entry name" value="MITOCHONDRIAL 28S RIBOSOMAL PROTEIN S6"/>
    <property type="match status" value="1"/>
</dbReference>
<dbReference type="PANTHER" id="PTHR21011:SF1">
    <property type="entry name" value="SMALL RIBOSOMAL SUBUNIT PROTEIN BS6M"/>
    <property type="match status" value="1"/>
</dbReference>
<dbReference type="Pfam" id="PF01250">
    <property type="entry name" value="Ribosomal_S6"/>
    <property type="match status" value="1"/>
</dbReference>
<dbReference type="SUPFAM" id="SSF54995">
    <property type="entry name" value="Ribosomal protein S6"/>
    <property type="match status" value="1"/>
</dbReference>
<keyword id="KW-0687">Ribonucleoprotein</keyword>
<keyword id="KW-0689">Ribosomal protein</keyword>
<keyword id="KW-0694">RNA-binding</keyword>
<keyword id="KW-0699">rRNA-binding</keyword>
<accession>B2I9S9</accession>
<comment type="function">
    <text evidence="1">Binds together with bS18 to 16S ribosomal RNA.</text>
</comment>
<comment type="similarity">
    <text evidence="1">Belongs to the bacterial ribosomal protein bS6 family.</text>
</comment>
<name>RS6_XYLF2</name>
<sequence>MGRHYEIVLLVHPDQSEQVQAMLERYKALIENGHGKIHRLEDWGRRQLAYPIQKLVKAHYLMMNIEVEQSVLNELVDLFRFNDAILRHLAIKRSGPDTEQSFIMKSKDDKGDKPERRRRDDDENGDVGVSNDSDNDGGNAEAA</sequence>
<protein>
    <recommendedName>
        <fullName evidence="1">Small ribosomal subunit protein bS6</fullName>
    </recommendedName>
    <alternativeName>
        <fullName evidence="3">30S ribosomal protein S6</fullName>
    </alternativeName>
</protein>